<name>ACCA_LEGPA</name>
<accession>Q5X6W5</accession>
<organism>
    <name type="scientific">Legionella pneumophila (strain Paris)</name>
    <dbReference type="NCBI Taxonomy" id="297246"/>
    <lineage>
        <taxon>Bacteria</taxon>
        <taxon>Pseudomonadati</taxon>
        <taxon>Pseudomonadota</taxon>
        <taxon>Gammaproteobacteria</taxon>
        <taxon>Legionellales</taxon>
        <taxon>Legionellaceae</taxon>
        <taxon>Legionella</taxon>
    </lineage>
</organism>
<dbReference type="EC" id="2.1.3.15" evidence="1"/>
<dbReference type="EMBL" id="CR628336">
    <property type="protein sequence ID" value="CAH11999.1"/>
    <property type="molecule type" value="Genomic_DNA"/>
</dbReference>
<dbReference type="RefSeq" id="WP_010946522.1">
    <property type="nucleotide sequence ID" value="NC_006368.1"/>
</dbReference>
<dbReference type="SMR" id="Q5X6W5"/>
<dbReference type="KEGG" id="lpp:lpp0849"/>
<dbReference type="LegioList" id="lpp0849"/>
<dbReference type="HOGENOM" id="CLU_015486_0_2_6"/>
<dbReference type="UniPathway" id="UPA00655">
    <property type="reaction ID" value="UER00711"/>
</dbReference>
<dbReference type="GO" id="GO:0009317">
    <property type="term" value="C:acetyl-CoA carboxylase complex"/>
    <property type="evidence" value="ECO:0007669"/>
    <property type="project" value="InterPro"/>
</dbReference>
<dbReference type="GO" id="GO:0003989">
    <property type="term" value="F:acetyl-CoA carboxylase activity"/>
    <property type="evidence" value="ECO:0007669"/>
    <property type="project" value="InterPro"/>
</dbReference>
<dbReference type="GO" id="GO:0005524">
    <property type="term" value="F:ATP binding"/>
    <property type="evidence" value="ECO:0007669"/>
    <property type="project" value="UniProtKB-KW"/>
</dbReference>
<dbReference type="GO" id="GO:0016743">
    <property type="term" value="F:carboxyl- or carbamoyltransferase activity"/>
    <property type="evidence" value="ECO:0007669"/>
    <property type="project" value="UniProtKB-UniRule"/>
</dbReference>
<dbReference type="GO" id="GO:0006633">
    <property type="term" value="P:fatty acid biosynthetic process"/>
    <property type="evidence" value="ECO:0007669"/>
    <property type="project" value="UniProtKB-KW"/>
</dbReference>
<dbReference type="GO" id="GO:2001295">
    <property type="term" value="P:malonyl-CoA biosynthetic process"/>
    <property type="evidence" value="ECO:0007669"/>
    <property type="project" value="UniProtKB-UniRule"/>
</dbReference>
<dbReference type="Gene3D" id="3.90.226.10">
    <property type="entry name" value="2-enoyl-CoA Hydratase, Chain A, domain 1"/>
    <property type="match status" value="1"/>
</dbReference>
<dbReference type="HAMAP" id="MF_00823">
    <property type="entry name" value="AcetylCoA_CT_alpha"/>
    <property type="match status" value="1"/>
</dbReference>
<dbReference type="InterPro" id="IPR001095">
    <property type="entry name" value="Acetyl_CoA_COase_a_su"/>
</dbReference>
<dbReference type="InterPro" id="IPR029045">
    <property type="entry name" value="ClpP/crotonase-like_dom_sf"/>
</dbReference>
<dbReference type="InterPro" id="IPR011763">
    <property type="entry name" value="COA_CT_C"/>
</dbReference>
<dbReference type="NCBIfam" id="TIGR00513">
    <property type="entry name" value="accA"/>
    <property type="match status" value="1"/>
</dbReference>
<dbReference type="NCBIfam" id="NF041504">
    <property type="entry name" value="AccA_sub"/>
    <property type="match status" value="1"/>
</dbReference>
<dbReference type="NCBIfam" id="NF004344">
    <property type="entry name" value="PRK05724.1"/>
    <property type="match status" value="1"/>
</dbReference>
<dbReference type="PANTHER" id="PTHR42853">
    <property type="entry name" value="ACETYL-COENZYME A CARBOXYLASE CARBOXYL TRANSFERASE SUBUNIT ALPHA"/>
    <property type="match status" value="1"/>
</dbReference>
<dbReference type="PANTHER" id="PTHR42853:SF3">
    <property type="entry name" value="ACETYL-COENZYME A CARBOXYLASE CARBOXYL TRANSFERASE SUBUNIT ALPHA, CHLOROPLASTIC"/>
    <property type="match status" value="1"/>
</dbReference>
<dbReference type="Pfam" id="PF03255">
    <property type="entry name" value="ACCA"/>
    <property type="match status" value="1"/>
</dbReference>
<dbReference type="PRINTS" id="PR01069">
    <property type="entry name" value="ACCCTRFRASEA"/>
</dbReference>
<dbReference type="SUPFAM" id="SSF52096">
    <property type="entry name" value="ClpP/crotonase"/>
    <property type="match status" value="1"/>
</dbReference>
<dbReference type="PROSITE" id="PS50989">
    <property type="entry name" value="COA_CT_CTER"/>
    <property type="match status" value="1"/>
</dbReference>
<gene>
    <name evidence="1" type="primary">accA</name>
    <name type="ordered locus">lpp0849</name>
</gene>
<feature type="chain" id="PRO_0000223780" description="Acetyl-coenzyme A carboxylase carboxyl transferase subunit alpha">
    <location>
        <begin position="1"/>
        <end position="317"/>
    </location>
</feature>
<feature type="domain" description="CoA carboxyltransferase C-terminal" evidence="2">
    <location>
        <begin position="32"/>
        <end position="293"/>
    </location>
</feature>
<reference key="1">
    <citation type="journal article" date="2004" name="Nat. Genet.">
        <title>Evidence in the Legionella pneumophila genome for exploitation of host cell functions and high genome plasticity.</title>
        <authorList>
            <person name="Cazalet C."/>
            <person name="Rusniok C."/>
            <person name="Brueggemann H."/>
            <person name="Zidane N."/>
            <person name="Magnier A."/>
            <person name="Ma L."/>
            <person name="Tichit M."/>
            <person name="Jarraud S."/>
            <person name="Bouchier C."/>
            <person name="Vandenesch F."/>
            <person name="Kunst F."/>
            <person name="Etienne J."/>
            <person name="Glaser P."/>
            <person name="Buchrieser C."/>
        </authorList>
    </citation>
    <scope>NUCLEOTIDE SEQUENCE [LARGE SCALE GENOMIC DNA]</scope>
    <source>
        <strain>Paris</strain>
    </source>
</reference>
<sequence>MTRQFLEFEQPIEELNQKIEALRMVGSDNEVNLSEEIARLEAKCSELTENIFSRLEPWQIAQMARHPLRPQTTDYIERIFTDFQELHGDRSYSSAPAIIGGMARLNGEPVMVLGHQKGKRTKEKVYRNFGMARPEEYRKALRLMRMAEKFKMPVVTFIDTAGAYPGIGAEERNQSEAIARNLFAMSRIKTPIVCIVTGEAGSGGALAIGVGDKIIMLQFSIYSVISPEGCASILWKDASKASEAARAMGITADRIFENELVDMVVPEPLGGAHRDVDEMASRLKRLLTSELQALKKVPLDQLIELRYQKFMAMGACD</sequence>
<proteinExistence type="inferred from homology"/>
<comment type="function">
    <text evidence="1">Component of the acetyl coenzyme A carboxylase (ACC) complex. First, biotin carboxylase catalyzes the carboxylation of biotin on its carrier protein (BCCP) and then the CO(2) group is transferred by the carboxyltransferase to acetyl-CoA to form malonyl-CoA.</text>
</comment>
<comment type="catalytic activity">
    <reaction evidence="1">
        <text>N(6)-carboxybiotinyl-L-lysyl-[protein] + acetyl-CoA = N(6)-biotinyl-L-lysyl-[protein] + malonyl-CoA</text>
        <dbReference type="Rhea" id="RHEA:54728"/>
        <dbReference type="Rhea" id="RHEA-COMP:10505"/>
        <dbReference type="Rhea" id="RHEA-COMP:10506"/>
        <dbReference type="ChEBI" id="CHEBI:57288"/>
        <dbReference type="ChEBI" id="CHEBI:57384"/>
        <dbReference type="ChEBI" id="CHEBI:83144"/>
        <dbReference type="ChEBI" id="CHEBI:83145"/>
        <dbReference type="EC" id="2.1.3.15"/>
    </reaction>
</comment>
<comment type="pathway">
    <text evidence="1">Lipid metabolism; malonyl-CoA biosynthesis; malonyl-CoA from acetyl-CoA: step 1/1.</text>
</comment>
<comment type="subunit">
    <text evidence="1">Acetyl-CoA carboxylase is a heterohexamer composed of biotin carboxyl carrier protein (AccB), biotin carboxylase (AccC) and two subunits each of ACCase subunit alpha (AccA) and ACCase subunit beta (AccD).</text>
</comment>
<comment type="subcellular location">
    <subcellularLocation>
        <location evidence="1">Cytoplasm</location>
    </subcellularLocation>
</comment>
<comment type="similarity">
    <text evidence="1">Belongs to the AccA family.</text>
</comment>
<protein>
    <recommendedName>
        <fullName evidence="1">Acetyl-coenzyme A carboxylase carboxyl transferase subunit alpha</fullName>
        <shortName evidence="1">ACCase subunit alpha</shortName>
        <shortName evidence="1">Acetyl-CoA carboxylase carboxyltransferase subunit alpha</shortName>
        <ecNumber evidence="1">2.1.3.15</ecNumber>
    </recommendedName>
</protein>
<keyword id="KW-0067">ATP-binding</keyword>
<keyword id="KW-0963">Cytoplasm</keyword>
<keyword id="KW-0275">Fatty acid biosynthesis</keyword>
<keyword id="KW-0276">Fatty acid metabolism</keyword>
<keyword id="KW-0444">Lipid biosynthesis</keyword>
<keyword id="KW-0443">Lipid metabolism</keyword>
<keyword id="KW-0547">Nucleotide-binding</keyword>
<keyword id="KW-0808">Transferase</keyword>
<evidence type="ECO:0000255" key="1">
    <source>
        <dbReference type="HAMAP-Rule" id="MF_00823"/>
    </source>
</evidence>
<evidence type="ECO:0000255" key="2">
    <source>
        <dbReference type="PROSITE-ProRule" id="PRU01137"/>
    </source>
</evidence>